<name>Y321_ROSDO</name>
<protein>
    <recommendedName>
        <fullName evidence="1">UPF0178 protein RD1_0321</fullName>
    </recommendedName>
</protein>
<organism>
    <name type="scientific">Roseobacter denitrificans (strain ATCC 33942 / OCh 114)</name>
    <name type="common">Erythrobacter sp. (strain OCh 114)</name>
    <name type="synonym">Roseobacter denitrificans</name>
    <dbReference type="NCBI Taxonomy" id="375451"/>
    <lineage>
        <taxon>Bacteria</taxon>
        <taxon>Pseudomonadati</taxon>
        <taxon>Pseudomonadota</taxon>
        <taxon>Alphaproteobacteria</taxon>
        <taxon>Rhodobacterales</taxon>
        <taxon>Roseobacteraceae</taxon>
        <taxon>Roseobacter</taxon>
    </lineage>
</organism>
<keyword id="KW-1185">Reference proteome</keyword>
<comment type="similarity">
    <text evidence="1">Belongs to the UPF0178 family.</text>
</comment>
<accession>Q16D98</accession>
<evidence type="ECO:0000255" key="1">
    <source>
        <dbReference type="HAMAP-Rule" id="MF_00489"/>
    </source>
</evidence>
<proteinExistence type="inferred from homology"/>
<gene>
    <name type="ordered locus">RD1_0321</name>
</gene>
<feature type="chain" id="PRO_1000014440" description="UPF0178 protein RD1_0321">
    <location>
        <begin position="1"/>
        <end position="151"/>
    </location>
</feature>
<dbReference type="EMBL" id="CP000362">
    <property type="protein sequence ID" value="ABG30045.1"/>
    <property type="molecule type" value="Genomic_DNA"/>
</dbReference>
<dbReference type="RefSeq" id="WP_011566667.1">
    <property type="nucleotide sequence ID" value="NC_008209.1"/>
</dbReference>
<dbReference type="STRING" id="375451.RD1_0321"/>
<dbReference type="KEGG" id="rde:RD1_0321"/>
<dbReference type="eggNOG" id="COG1671">
    <property type="taxonomic scope" value="Bacteria"/>
</dbReference>
<dbReference type="HOGENOM" id="CLU_106619_2_1_5"/>
<dbReference type="OrthoDB" id="9798918at2"/>
<dbReference type="Proteomes" id="UP000007029">
    <property type="component" value="Chromosome"/>
</dbReference>
<dbReference type="HAMAP" id="MF_00489">
    <property type="entry name" value="UPF0178"/>
    <property type="match status" value="1"/>
</dbReference>
<dbReference type="InterPro" id="IPR003791">
    <property type="entry name" value="UPF0178"/>
</dbReference>
<dbReference type="NCBIfam" id="NF001095">
    <property type="entry name" value="PRK00124.1"/>
    <property type="match status" value="1"/>
</dbReference>
<dbReference type="PANTHER" id="PTHR35146">
    <property type="entry name" value="UPF0178 PROTEIN YAII"/>
    <property type="match status" value="1"/>
</dbReference>
<dbReference type="PANTHER" id="PTHR35146:SF1">
    <property type="entry name" value="UPF0178 PROTEIN YAII"/>
    <property type="match status" value="1"/>
</dbReference>
<dbReference type="Pfam" id="PF02639">
    <property type="entry name" value="DUF188"/>
    <property type="match status" value="1"/>
</dbReference>
<sequence length="151" mass="15990">MTALYIDADACPVKSEAERVATRHRVKMYIVSNGGLRPSQNPLVETVIVPDGPDVADMWIADRCGTGDVVVTGDIPLAAKCIEAGALVLKHNGEALTSANIGNVLASRDLMADLRAADPFRQGGGKSFGKADRSRFLDGLERTLRKAATLG</sequence>
<reference key="1">
    <citation type="journal article" date="2007" name="J. Bacteriol.">
        <title>The complete genome sequence of Roseobacter denitrificans reveals a mixotrophic rather than photosynthetic metabolism.</title>
        <authorList>
            <person name="Swingley W.D."/>
            <person name="Sadekar S."/>
            <person name="Mastrian S.D."/>
            <person name="Matthies H.J."/>
            <person name="Hao J."/>
            <person name="Ramos H."/>
            <person name="Acharya C.R."/>
            <person name="Conrad A.L."/>
            <person name="Taylor H.L."/>
            <person name="Dejesa L.C."/>
            <person name="Shah M.K."/>
            <person name="O'Huallachain M.E."/>
            <person name="Lince M.T."/>
            <person name="Blankenship R.E."/>
            <person name="Beatty J.T."/>
            <person name="Touchman J.W."/>
        </authorList>
    </citation>
    <scope>NUCLEOTIDE SEQUENCE [LARGE SCALE GENOMIC DNA]</scope>
    <source>
        <strain>ATCC 33942 / OCh 114</strain>
    </source>
</reference>